<comment type="subcellular location">
    <subcellularLocation>
        <location evidence="1">Cell membrane</location>
        <topology evidence="1">Multi-pass membrane protein</topology>
    </subcellularLocation>
</comment>
<comment type="similarity">
    <text evidence="1">Belongs to the UPF0316 family.</text>
</comment>
<protein>
    <recommendedName>
        <fullName evidence="1">UPF0316 protein Mboo_0605</fullName>
    </recommendedName>
</protein>
<dbReference type="EMBL" id="CP000780">
    <property type="protein sequence ID" value="ABS55123.1"/>
    <property type="molecule type" value="Genomic_DNA"/>
</dbReference>
<dbReference type="RefSeq" id="WP_012106144.1">
    <property type="nucleotide sequence ID" value="NC_009712.1"/>
</dbReference>
<dbReference type="SMR" id="A7I5W2"/>
<dbReference type="STRING" id="456442.Mboo_0605"/>
<dbReference type="GeneID" id="5412165"/>
<dbReference type="KEGG" id="mbn:Mboo_0605"/>
<dbReference type="eggNOG" id="arCOG06902">
    <property type="taxonomic scope" value="Archaea"/>
</dbReference>
<dbReference type="HOGENOM" id="CLU_106166_0_0_2"/>
<dbReference type="OrthoDB" id="118989at2157"/>
<dbReference type="Proteomes" id="UP000002408">
    <property type="component" value="Chromosome"/>
</dbReference>
<dbReference type="GO" id="GO:0005886">
    <property type="term" value="C:plasma membrane"/>
    <property type="evidence" value="ECO:0007669"/>
    <property type="project" value="UniProtKB-SubCell"/>
</dbReference>
<dbReference type="CDD" id="cd16381">
    <property type="entry name" value="YitT_C_like_1"/>
    <property type="match status" value="1"/>
</dbReference>
<dbReference type="HAMAP" id="MF_01515">
    <property type="entry name" value="UPF0316"/>
    <property type="match status" value="1"/>
</dbReference>
<dbReference type="InterPro" id="IPR019264">
    <property type="entry name" value="DUF2179"/>
</dbReference>
<dbReference type="InterPro" id="IPR044035">
    <property type="entry name" value="DUF5698"/>
</dbReference>
<dbReference type="InterPro" id="IPR022930">
    <property type="entry name" value="UPF0316"/>
</dbReference>
<dbReference type="PANTHER" id="PTHR40060">
    <property type="entry name" value="UPF0316 PROTEIN YEBE"/>
    <property type="match status" value="1"/>
</dbReference>
<dbReference type="PANTHER" id="PTHR40060:SF1">
    <property type="entry name" value="UPF0316 PROTEIN YEBE"/>
    <property type="match status" value="1"/>
</dbReference>
<dbReference type="Pfam" id="PF10035">
    <property type="entry name" value="DUF2179"/>
    <property type="match status" value="1"/>
</dbReference>
<dbReference type="Pfam" id="PF18955">
    <property type="entry name" value="DUF5698"/>
    <property type="match status" value="1"/>
</dbReference>
<keyword id="KW-1003">Cell membrane</keyword>
<keyword id="KW-0472">Membrane</keyword>
<keyword id="KW-1185">Reference proteome</keyword>
<keyword id="KW-0812">Transmembrane</keyword>
<keyword id="KW-1133">Transmembrane helix</keyword>
<name>Y605_METB6</name>
<reference key="1">
    <citation type="journal article" date="2015" name="Microbiology">
        <title>Genome of Methanoregula boonei 6A8 reveals adaptations to oligotrophic peatland environments.</title>
        <authorList>
            <person name="Braeuer S."/>
            <person name="Cadillo-Quiroz H."/>
            <person name="Kyrpides N."/>
            <person name="Woyke T."/>
            <person name="Goodwin L."/>
            <person name="Detter C."/>
            <person name="Podell S."/>
            <person name="Yavitt J.B."/>
            <person name="Zinder S.H."/>
        </authorList>
    </citation>
    <scope>NUCLEOTIDE SEQUENCE [LARGE SCALE GENOMIC DNA]</scope>
    <source>
        <strain>DSM 21154 / JCM 14090 / 6A8</strain>
    </source>
</reference>
<gene>
    <name type="ordered locus">Mboo_0605</name>
</gene>
<proteinExistence type="inferred from homology"/>
<organism>
    <name type="scientific">Methanoregula boonei (strain DSM 21154 / JCM 14090 / 6A8)</name>
    <dbReference type="NCBI Taxonomy" id="456442"/>
    <lineage>
        <taxon>Archaea</taxon>
        <taxon>Methanobacteriati</taxon>
        <taxon>Methanobacteriota</taxon>
        <taxon>Stenosarchaea group</taxon>
        <taxon>Methanomicrobia</taxon>
        <taxon>Methanomicrobiales</taxon>
        <taxon>Methanoregulaceae</taxon>
        <taxon>Methanoregula</taxon>
    </lineage>
</organism>
<sequence length="190" mass="21110">MDIGTFWSVAAIPLLILVARIAEASLESVRTIYISKGHANLAAYVGIVKTGIWLISTGLVLTDLMQFWNLFAYLAGYGMGTVLGMEIENLISIGYVIVRLITPSDPQALMSRLSTLGYGMTRIEGTGSFSGSVSIIFMIVPRKELSRLLSIISREYPDLLYTIEDVRNIKDGARIFYQDPKRRILSFFGM</sequence>
<accession>A7I5W2</accession>
<evidence type="ECO:0000255" key="1">
    <source>
        <dbReference type="HAMAP-Rule" id="MF_01515"/>
    </source>
</evidence>
<feature type="chain" id="PRO_0000315260" description="UPF0316 protein Mboo_0605">
    <location>
        <begin position="1"/>
        <end position="190"/>
    </location>
</feature>
<feature type="transmembrane region" description="Helical" evidence="1">
    <location>
        <begin position="3"/>
        <end position="23"/>
    </location>
</feature>
<feature type="transmembrane region" description="Helical" evidence="1">
    <location>
        <begin position="41"/>
        <end position="61"/>
    </location>
</feature>
<feature type="transmembrane region" description="Helical" evidence="1">
    <location>
        <begin position="67"/>
        <end position="87"/>
    </location>
</feature>